<dbReference type="EC" id="3.5.1.-" evidence="1"/>
<dbReference type="EMBL" id="CU928162">
    <property type="protein sequence ID" value="CAR07366.1"/>
    <property type="molecule type" value="Genomic_DNA"/>
</dbReference>
<dbReference type="RefSeq" id="WP_012601454.1">
    <property type="nucleotide sequence ID" value="NC_011745.1"/>
</dbReference>
<dbReference type="SMR" id="B7MTF2"/>
<dbReference type="ESTHER" id="ecoli-rutD">
    <property type="family name" value="RutD"/>
</dbReference>
<dbReference type="KEGG" id="ecq:ECED1_1165"/>
<dbReference type="HOGENOM" id="CLU_020336_50_1_6"/>
<dbReference type="Proteomes" id="UP000000748">
    <property type="component" value="Chromosome"/>
</dbReference>
<dbReference type="GO" id="GO:0016811">
    <property type="term" value="F:hydrolase activity, acting on carbon-nitrogen (but not peptide) bonds, in linear amides"/>
    <property type="evidence" value="ECO:0007669"/>
    <property type="project" value="InterPro"/>
</dbReference>
<dbReference type="GO" id="GO:0019740">
    <property type="term" value="P:nitrogen utilization"/>
    <property type="evidence" value="ECO:0007669"/>
    <property type="project" value="UniProtKB-UniRule"/>
</dbReference>
<dbReference type="GO" id="GO:0006212">
    <property type="term" value="P:uracil catabolic process"/>
    <property type="evidence" value="ECO:0007669"/>
    <property type="project" value="UniProtKB-UniRule"/>
</dbReference>
<dbReference type="FunFam" id="3.40.50.1820:FF:000052">
    <property type="entry name" value="Putative aminoacrylate hydrolase RutD"/>
    <property type="match status" value="1"/>
</dbReference>
<dbReference type="Gene3D" id="3.40.50.1820">
    <property type="entry name" value="alpha/beta hydrolase"/>
    <property type="match status" value="1"/>
</dbReference>
<dbReference type="HAMAP" id="MF_00832">
    <property type="entry name" value="RutD"/>
    <property type="match status" value="1"/>
</dbReference>
<dbReference type="InterPro" id="IPR000073">
    <property type="entry name" value="AB_hydrolase_1"/>
</dbReference>
<dbReference type="InterPro" id="IPR029058">
    <property type="entry name" value="AB_hydrolase_fold"/>
</dbReference>
<dbReference type="InterPro" id="IPR050266">
    <property type="entry name" value="AB_hydrolase_sf"/>
</dbReference>
<dbReference type="InterPro" id="IPR019913">
    <property type="entry name" value="Pyrimidine_utilisation_RutD"/>
</dbReference>
<dbReference type="NCBIfam" id="TIGR03611">
    <property type="entry name" value="RutD"/>
    <property type="match status" value="1"/>
</dbReference>
<dbReference type="PANTHER" id="PTHR43798">
    <property type="entry name" value="MONOACYLGLYCEROL LIPASE"/>
    <property type="match status" value="1"/>
</dbReference>
<dbReference type="Pfam" id="PF00561">
    <property type="entry name" value="Abhydrolase_1"/>
    <property type="match status" value="1"/>
</dbReference>
<dbReference type="SUPFAM" id="SSF53474">
    <property type="entry name" value="alpha/beta-Hydrolases"/>
    <property type="match status" value="1"/>
</dbReference>
<evidence type="ECO:0000255" key="1">
    <source>
        <dbReference type="HAMAP-Rule" id="MF_00832"/>
    </source>
</evidence>
<reference key="1">
    <citation type="journal article" date="2009" name="PLoS Genet.">
        <title>Organised genome dynamics in the Escherichia coli species results in highly diverse adaptive paths.</title>
        <authorList>
            <person name="Touchon M."/>
            <person name="Hoede C."/>
            <person name="Tenaillon O."/>
            <person name="Barbe V."/>
            <person name="Baeriswyl S."/>
            <person name="Bidet P."/>
            <person name="Bingen E."/>
            <person name="Bonacorsi S."/>
            <person name="Bouchier C."/>
            <person name="Bouvet O."/>
            <person name="Calteau A."/>
            <person name="Chiapello H."/>
            <person name="Clermont O."/>
            <person name="Cruveiller S."/>
            <person name="Danchin A."/>
            <person name="Diard M."/>
            <person name="Dossat C."/>
            <person name="Karoui M.E."/>
            <person name="Frapy E."/>
            <person name="Garry L."/>
            <person name="Ghigo J.M."/>
            <person name="Gilles A.M."/>
            <person name="Johnson J."/>
            <person name="Le Bouguenec C."/>
            <person name="Lescat M."/>
            <person name="Mangenot S."/>
            <person name="Martinez-Jehanne V."/>
            <person name="Matic I."/>
            <person name="Nassif X."/>
            <person name="Oztas S."/>
            <person name="Petit M.A."/>
            <person name="Pichon C."/>
            <person name="Rouy Z."/>
            <person name="Ruf C.S."/>
            <person name="Schneider D."/>
            <person name="Tourret J."/>
            <person name="Vacherie B."/>
            <person name="Vallenet D."/>
            <person name="Medigue C."/>
            <person name="Rocha E.P.C."/>
            <person name="Denamur E."/>
        </authorList>
    </citation>
    <scope>NUCLEOTIDE SEQUENCE [LARGE SCALE GENOMIC DNA]</scope>
    <source>
        <strain>ED1a</strain>
    </source>
</reference>
<protein>
    <recommendedName>
        <fullName evidence="1">Putative carbamate hydrolase RutD</fullName>
        <ecNumber evidence="1">3.5.1.-</ecNumber>
    </recommendedName>
    <alternativeName>
        <fullName evidence="1">Aminohydrolase</fullName>
    </alternativeName>
</protein>
<accession>B7MTF2</accession>
<organism>
    <name type="scientific">Escherichia coli O81 (strain ED1a)</name>
    <dbReference type="NCBI Taxonomy" id="585397"/>
    <lineage>
        <taxon>Bacteria</taxon>
        <taxon>Pseudomonadati</taxon>
        <taxon>Pseudomonadota</taxon>
        <taxon>Gammaproteobacteria</taxon>
        <taxon>Enterobacterales</taxon>
        <taxon>Enterobacteriaceae</taxon>
        <taxon>Escherichia</taxon>
    </lineage>
</organism>
<name>RUTD_ECO81</name>
<comment type="function">
    <text evidence="1">Involved in pyrimidine catabolism. May facilitate the hydrolysis of carbamate, a reaction that can also occur spontaneously.</text>
</comment>
<comment type="catalytic activity">
    <reaction evidence="1">
        <text>carbamate + 2 H(+) = NH4(+) + CO2</text>
        <dbReference type="Rhea" id="RHEA:15649"/>
        <dbReference type="ChEBI" id="CHEBI:13941"/>
        <dbReference type="ChEBI" id="CHEBI:15378"/>
        <dbReference type="ChEBI" id="CHEBI:16526"/>
        <dbReference type="ChEBI" id="CHEBI:28938"/>
    </reaction>
</comment>
<comment type="similarity">
    <text evidence="1">Belongs to the AB hydrolase superfamily. Hydrolase RutD family.</text>
</comment>
<proteinExistence type="inferred from homology"/>
<sequence length="266" mass="28869">MKLSLSPPPYADAPVVVLISGLGGSGSYWLPQLAVLDQEYQVVCYDQRGTGNNPDTLAEDYSIAQMAAELHQALVAAGIERYAVIGHALGALVGMQLALDYPASVTVLVSVNGWLRINAHTRRCFQVREQLLHSGGAQAWVEAQPLFLYPADWMAARAPRLEAEDALALAHFQGKNNLLRRLNALKRADFSRHADRIRCPVQIICASDDLLVPSACSSELHAALPDSQKMVMRYGGHACNVTAPETFNALLLNGLASLLHHREAAL</sequence>
<gene>
    <name evidence="1" type="primary">rutD</name>
    <name type="ordered locus">ECED1_1165</name>
</gene>
<feature type="chain" id="PRO_0000402965" description="Putative carbamate hydrolase RutD">
    <location>
        <begin position="1"/>
        <end position="266"/>
    </location>
</feature>
<feature type="domain" description="AB hydrolase-1" evidence="1">
    <location>
        <begin position="14"/>
        <end position="116"/>
    </location>
</feature>
<keyword id="KW-0378">Hydrolase</keyword>